<reference key="1">
    <citation type="journal article" date="2005" name="Mol. Biol. Evol.">
        <title>Evolution of bitter taste receptors in humans and apes.</title>
        <authorList>
            <person name="Fischer A."/>
            <person name="Gilad Y."/>
            <person name="Man O."/>
            <person name="Paeaebo S."/>
        </authorList>
    </citation>
    <scope>NUCLEOTIDE SEQUENCE [GENOMIC DNA]</scope>
</reference>
<reference key="2">
    <citation type="journal article" date="2004" name="Proc. Natl. Acad. Sci. U.S.A.">
        <title>Divergence of T2R chemosensory receptor families in humans, bonobos, and chimpanzees.</title>
        <authorList>
            <person name="Parry C.M."/>
            <person name="Erkner A."/>
            <person name="le Coutre J."/>
        </authorList>
    </citation>
    <scope>NUCLEOTIDE SEQUENCE [GENOMIC DNA]</scope>
</reference>
<dbReference type="EMBL" id="AY724844">
    <property type="protein sequence ID" value="AAU21075.1"/>
    <property type="molecule type" value="Genomic_DNA"/>
</dbReference>
<dbReference type="EMBL" id="AY677154">
    <property type="protein sequence ID" value="AAV28582.1"/>
    <property type="molecule type" value="Genomic_DNA"/>
</dbReference>
<dbReference type="RefSeq" id="XP_003829658.1">
    <property type="nucleotide sequence ID" value="XM_003829610.2"/>
</dbReference>
<dbReference type="SMR" id="Q646E4"/>
<dbReference type="STRING" id="9597.ENSPPAP00000002262"/>
<dbReference type="GlyCosmos" id="Q646E4">
    <property type="glycosylation" value="1 site, No reported glycans"/>
</dbReference>
<dbReference type="Ensembl" id="ENSPPAT00000011081.1">
    <property type="protein sequence ID" value="ENSPPAP00000002262.1"/>
    <property type="gene ID" value="ENSPPAG00000010258.1"/>
</dbReference>
<dbReference type="eggNOG" id="ENOG502TE6U">
    <property type="taxonomic scope" value="Eukaryota"/>
</dbReference>
<dbReference type="GeneTree" id="ENSGT01100000263477"/>
<dbReference type="OMA" id="ILCQIRC"/>
<dbReference type="Proteomes" id="UP000240080">
    <property type="component" value="Chromosome 12"/>
</dbReference>
<dbReference type="Bgee" id="ENSPPAG00000010258">
    <property type="expression patterns" value="Expressed in heart"/>
</dbReference>
<dbReference type="GO" id="GO:0005886">
    <property type="term" value="C:plasma membrane"/>
    <property type="evidence" value="ECO:0007669"/>
    <property type="project" value="UniProtKB-ARBA"/>
</dbReference>
<dbReference type="GO" id="GO:0033038">
    <property type="term" value="F:bitter taste receptor activity"/>
    <property type="evidence" value="ECO:0007669"/>
    <property type="project" value="Ensembl"/>
</dbReference>
<dbReference type="GO" id="GO:0004930">
    <property type="term" value="F:G protein-coupled receptor activity"/>
    <property type="evidence" value="ECO:0007669"/>
    <property type="project" value="UniProtKB-KW"/>
</dbReference>
<dbReference type="CDD" id="cd15027">
    <property type="entry name" value="7tm_TAS2R43-like"/>
    <property type="match status" value="1"/>
</dbReference>
<dbReference type="FunFam" id="1.20.1070.10:FF:000042">
    <property type="entry name" value="Taste receptor type 2 member 7"/>
    <property type="match status" value="1"/>
</dbReference>
<dbReference type="Gene3D" id="1.20.1070.10">
    <property type="entry name" value="Rhodopsin 7-helix transmembrane proteins"/>
    <property type="match status" value="1"/>
</dbReference>
<dbReference type="InterPro" id="IPR007960">
    <property type="entry name" value="TAS2R"/>
</dbReference>
<dbReference type="PANTHER" id="PTHR11394">
    <property type="entry name" value="TASTE RECEPTOR TYPE 2"/>
    <property type="match status" value="1"/>
</dbReference>
<dbReference type="PANTHER" id="PTHR11394:SF43">
    <property type="entry name" value="TASTE RECEPTOR TYPE 2 MEMBER 50"/>
    <property type="match status" value="1"/>
</dbReference>
<dbReference type="Pfam" id="PF05296">
    <property type="entry name" value="TAS2R"/>
    <property type="match status" value="1"/>
</dbReference>
<dbReference type="SUPFAM" id="SSF81321">
    <property type="entry name" value="Family A G protein-coupled receptor-like"/>
    <property type="match status" value="1"/>
</dbReference>
<keyword id="KW-0297">G-protein coupled receptor</keyword>
<keyword id="KW-0325">Glycoprotein</keyword>
<keyword id="KW-0472">Membrane</keyword>
<keyword id="KW-0675">Receptor</keyword>
<keyword id="KW-1185">Reference proteome</keyword>
<keyword id="KW-0716">Sensory transduction</keyword>
<keyword id="KW-0919">Taste</keyword>
<keyword id="KW-0807">Transducer</keyword>
<keyword id="KW-0812">Transmembrane</keyword>
<keyword id="KW-1133">Transmembrane helix</keyword>
<comment type="function">
    <text evidence="1">Receptor that may play a role in the perception of bitterness and is gustducin-linked. May play a role in sensing the chemical composition of the gastrointestinal content. The activity of this receptor may stimulate alpha gustducin, mediate PLC-beta-2 activation and lead to the gating of TRPM5 (By similarity).</text>
</comment>
<comment type="subcellular location">
    <subcellularLocation>
        <location>Membrane</location>
        <topology>Multi-pass membrane protein</topology>
    </subcellularLocation>
</comment>
<comment type="miscellaneous">
    <text>Most taste cells may be activated by a limited number of bitter compounds; individual taste cells can discriminate among bitter stimuli.</text>
</comment>
<comment type="similarity">
    <text evidence="3">Belongs to the G-protein coupled receptor T2R family.</text>
</comment>
<name>T2R50_PANPA</name>
<evidence type="ECO:0000250" key="1"/>
<evidence type="ECO:0000255" key="2"/>
<evidence type="ECO:0000305" key="3"/>
<proteinExistence type="inferred from homology"/>
<accession>Q646E4</accession>
<gene>
    <name type="primary">TAS2R50</name>
</gene>
<sequence>MITFLYIFFSILIMVLFVLGNFANGFIALVNFIDWVKRKKISSADQILTALAVSRIGLLWTLLLNWYLTVLNPAFYSVELRITSYNAWVVTNHFSMWLAASLSIFYLLKIANFSNLIFLHLKRRVRSVILVILLGTLIFLVCHLLVANMDESMWAEEYEGNITGKMKLRNTVHLSYLTVTTLWSFIPFTLSLISFLMLICSLCKHLKKMQLHGEGSQDLSTKVHIKALQTLISFLLLCAIFFLFLIISVWSPRRLRNDPVVMVSKAVGNIYLAFDSFILIWRTKKLKHTFLLILCQIRC</sequence>
<feature type="chain" id="PRO_0000082339" description="Taste receptor type 2 member 50">
    <location>
        <begin position="1"/>
        <end position="299"/>
    </location>
</feature>
<feature type="topological domain" description="Extracellular" evidence="2">
    <location>
        <position position="1"/>
    </location>
</feature>
<feature type="transmembrane region" description="Helical; Name=1" evidence="2">
    <location>
        <begin position="2"/>
        <end position="22"/>
    </location>
</feature>
<feature type="topological domain" description="Cytoplasmic" evidence="2">
    <location>
        <begin position="23"/>
        <end position="55"/>
    </location>
</feature>
<feature type="transmembrane region" description="Helical; Name=2" evidence="2">
    <location>
        <begin position="56"/>
        <end position="76"/>
    </location>
</feature>
<feature type="topological domain" description="Extracellular" evidence="2">
    <location>
        <begin position="77"/>
        <end position="87"/>
    </location>
</feature>
<feature type="transmembrane region" description="Helical; Name=3" evidence="2">
    <location>
        <begin position="88"/>
        <end position="108"/>
    </location>
</feature>
<feature type="topological domain" description="Cytoplasmic" evidence="2">
    <location>
        <begin position="109"/>
        <end position="126"/>
    </location>
</feature>
<feature type="transmembrane region" description="Helical; Name=4" evidence="2">
    <location>
        <begin position="127"/>
        <end position="147"/>
    </location>
</feature>
<feature type="topological domain" description="Extracellular" evidence="2">
    <location>
        <begin position="148"/>
        <end position="181"/>
    </location>
</feature>
<feature type="transmembrane region" description="Helical; Name=5" evidence="2">
    <location>
        <begin position="182"/>
        <end position="202"/>
    </location>
</feature>
<feature type="topological domain" description="Cytoplasmic" evidence="2">
    <location>
        <begin position="203"/>
        <end position="229"/>
    </location>
</feature>
<feature type="transmembrane region" description="Helical; Name=6" evidence="2">
    <location>
        <begin position="230"/>
        <end position="250"/>
    </location>
</feature>
<feature type="topological domain" description="Extracellular" evidence="2">
    <location>
        <begin position="251"/>
        <end position="259"/>
    </location>
</feature>
<feature type="transmembrane region" description="Helical; Name=7" evidence="2">
    <location>
        <begin position="260"/>
        <end position="280"/>
    </location>
</feature>
<feature type="topological domain" description="Cytoplasmic" evidence="2">
    <location>
        <begin position="281"/>
        <end position="299"/>
    </location>
</feature>
<feature type="glycosylation site" description="N-linked (GlcNAc...) asparagine" evidence="2">
    <location>
        <position position="161"/>
    </location>
</feature>
<organism>
    <name type="scientific">Pan paniscus</name>
    <name type="common">Pygmy chimpanzee</name>
    <name type="synonym">Bonobo</name>
    <dbReference type="NCBI Taxonomy" id="9597"/>
    <lineage>
        <taxon>Eukaryota</taxon>
        <taxon>Metazoa</taxon>
        <taxon>Chordata</taxon>
        <taxon>Craniata</taxon>
        <taxon>Vertebrata</taxon>
        <taxon>Euteleostomi</taxon>
        <taxon>Mammalia</taxon>
        <taxon>Eutheria</taxon>
        <taxon>Euarchontoglires</taxon>
        <taxon>Primates</taxon>
        <taxon>Haplorrhini</taxon>
        <taxon>Catarrhini</taxon>
        <taxon>Hominidae</taxon>
        <taxon>Pan</taxon>
    </lineage>
</organism>
<protein>
    <recommendedName>
        <fullName>Taste receptor type 2 member 50</fullName>
        <shortName>T2R50</shortName>
    </recommendedName>
</protein>